<sequence>MGALAARRCVEWLLGLYFVSHIPITLFIDLQAVLPPELYPQEFSNLLRWYSKEFKDPLMQEPPVWFKSFLLCELVFQLPFFPIAAYAFFKGSCRWIRIPAIIYAAHTITTLIPILYTLLFEDFSKAVAFKGQRPESFRERLTLVGVYAPYLIIPLILLLFMLRNPYYKYEEKRKKK</sequence>
<name>SGMR2_MOUSE</name>
<feature type="chain" id="PRO_0000254569" description="Sigma intracellular receptor 2">
    <location>
        <begin position="1"/>
        <end position="176"/>
    </location>
</feature>
<feature type="topological domain" description="Cytoplasmic" evidence="1">
    <location>
        <begin position="1"/>
        <end position="9"/>
    </location>
</feature>
<feature type="transmembrane region" description="Helical; Name=1" evidence="4">
    <location>
        <begin position="10"/>
        <end position="30"/>
    </location>
</feature>
<feature type="topological domain" description="Lumenal" evidence="1">
    <location>
        <begin position="31"/>
        <end position="68"/>
    </location>
</feature>
<feature type="transmembrane region" description="Helical; Name=2" evidence="4">
    <location>
        <begin position="69"/>
        <end position="89"/>
    </location>
</feature>
<feature type="topological domain" description="Cytoplasmic" evidence="1">
    <location>
        <begin position="90"/>
        <end position="99"/>
    </location>
</feature>
<feature type="transmembrane region" description="Helical; Name=3" evidence="4">
    <location>
        <begin position="100"/>
        <end position="120"/>
    </location>
</feature>
<feature type="topological domain" description="Lumenal" evidence="1">
    <location>
        <begin position="121"/>
        <end position="140"/>
    </location>
</feature>
<feature type="transmembrane region" description="Helical; Name=4" evidence="4">
    <location>
        <begin position="141"/>
        <end position="161"/>
    </location>
</feature>
<feature type="topological domain" description="Cytoplasmic" evidence="1">
    <location>
        <begin position="162"/>
        <end position="176"/>
    </location>
</feature>
<feature type="domain" description="EXPERA" evidence="5">
    <location>
        <begin position="10"/>
        <end position="158"/>
    </location>
</feature>
<feature type="short sequence motif" description="ER retention motif" evidence="3">
    <location>
        <begin position="172"/>
        <end position="176"/>
    </location>
</feature>
<feature type="binding site" evidence="2">
    <location>
        <position position="75"/>
    </location>
    <ligand>
        <name>cholesterol</name>
        <dbReference type="ChEBI" id="CHEBI:16113"/>
    </ligand>
</feature>
<feature type="binding site" evidence="2">
    <location>
        <position position="77"/>
    </location>
    <ligand>
        <name>cholesterol</name>
        <dbReference type="ChEBI" id="CHEBI:16113"/>
    </ligand>
</feature>
<feature type="site" description="Likely important for receptor folding" evidence="3">
    <location>
        <position position="56"/>
    </location>
</feature>
<feature type="site" description="Important for 20(S)-OHC binding and stereoselectivity" evidence="3">
    <location>
        <position position="150"/>
    </location>
</feature>
<feature type="mutagenesis site" description="No change in 20(S)-OHC binding." evidence="6">
    <original>E</original>
    <variation>A</variation>
    <location>
        <position position="61"/>
    </location>
</feature>
<feature type="mutagenesis site" description="Loss of protein synthesis." evidence="6">
    <original>F</original>
    <variation>A</variation>
    <location>
        <position position="88"/>
    </location>
</feature>
<feature type="mutagenesis site" description="No change in 20(S)-OHC binding." evidence="6">
    <original>W</original>
    <variation>A</variation>
    <location>
        <position position="95"/>
    </location>
</feature>
<feature type="mutagenesis site" description="Loss of 20(S)-OHC binding." evidence="6">
    <original>Y</original>
    <variation>A</variation>
    <location>
        <position position="150"/>
    </location>
</feature>
<feature type="mutagenesis site" description="Decreased 20(S)-OHC binding; loss of 20(S)-OHC epimer stereoselectivity." evidence="6">
    <original>Y</original>
    <variation>F</variation>
    <location>
        <position position="150"/>
    </location>
</feature>
<feature type="mutagenesis site" description="Loss of 20(S)-OHC binding; loss of 20(S)-OHC epimer stereoselectivity." evidence="6">
    <original>Y</original>
    <variation>S</variation>
    <location>
        <position position="150"/>
    </location>
</feature>
<gene>
    <name evidence="8" type="primary">Tmem97</name>
    <name evidence="3" type="synonym">S2r</name>
</gene>
<proteinExistence type="evidence at protein level"/>
<organism>
    <name type="scientific">Mus musculus</name>
    <name type="common">Mouse</name>
    <dbReference type="NCBI Taxonomy" id="10090"/>
    <lineage>
        <taxon>Eukaryota</taxon>
        <taxon>Metazoa</taxon>
        <taxon>Chordata</taxon>
        <taxon>Craniata</taxon>
        <taxon>Vertebrata</taxon>
        <taxon>Euteleostomi</taxon>
        <taxon>Mammalia</taxon>
        <taxon>Eutheria</taxon>
        <taxon>Euarchontoglires</taxon>
        <taxon>Glires</taxon>
        <taxon>Rodentia</taxon>
        <taxon>Myomorpha</taxon>
        <taxon>Muroidea</taxon>
        <taxon>Muridae</taxon>
        <taxon>Murinae</taxon>
        <taxon>Mus</taxon>
        <taxon>Mus</taxon>
    </lineage>
</organism>
<comment type="function">
    <text evidence="1 2 3 6">Sigma-2 receptor which contributes to ameliorate dysfunctional cellular processes and slow degenerative progression by regulating cell functions including cholesterol biosynthesis/trafficking, membrane trafficking, autophagy, lipid membrane-bound protein trafficking, and receptor stabilization at the cell surface. Forms a ternary complex with PGRMC1 receptor and low density lipoprotein receptor/LDLR at the plasma membrane, which increases LDLR-mediated LDL cholesterol internalization. Decreases lysosomal sterol transporter NPC1 availability to the cell, probably through NPC1-binding, hence controlling lipid transport, including cholesterol and LBPA, outside of late endosome/lysosome (By similarity). Binds regio- and stereoselective ligand 20(S)-hydroxycholesterol (20(S)-OHC) which enhances TMEM97-NPC1 interaction and decreases TMEM97-PGRMC1 and TMEM97-TSPO interactions, thereby linking OHC binding to cholesterol homeostasis (PubMed:34799735). Also able to bind cholesterol (By similarity). Binds histatin 1 (Hst 1)/HN1 salivary peptide at the ER membrane, which is critical for increasing mitochondria-ER contacts and stimulating Hst1 wound healing properties. May alter the activity of some cytochrome P450 proteins. Although shows homologies with sterol isomerases (EXPERA domain), not able to catalyze sterol isomerization. However, may act as sensors of these molecules (By similarity). Acts as a quality control factor in the ER, promoting the proteolytic degradation of nonproductive and extramitochondrial precursor proteins in the ER membrane thus removing them from the ER surface (By similarity).</text>
</comment>
<comment type="subunit">
    <text evidence="2 3">Homodimer (By similarity). Interacts with NPC1; the interaction impairs NPC1-mediated cholesterol transport. Interacts with PGRMC1 and LDLR; the interaction increases LDL internalization. Interacts with histatin 1/HTN1; the interaction induces HTN1-stimulating wound healing. Interacts with TSPO (By similarity).</text>
</comment>
<comment type="subcellular location">
    <subcellularLocation>
        <location evidence="3">Rough endoplasmic reticulum membrane</location>
        <topology evidence="4">Multi-pass membrane protein</topology>
    </subcellularLocation>
    <subcellularLocation>
        <location evidence="3">Nucleus membrane</location>
        <topology evidence="4">Multi-pass membrane protein</topology>
    </subcellularLocation>
</comment>
<comment type="domain">
    <text evidence="3">The EXPERA domain doesn't possess any sterol isomerase catalytic activity.</text>
</comment>
<comment type="domain">
    <text evidence="2">The four transmembrane helices are all kinked owing to the presence of proline residues in each, creating a ligand-binding cavity near the center of the protein.</text>
</comment>
<comment type="miscellaneous">
    <text evidence="3">Sigma receptors are classified into two subtypes (Sigma-1 and Sigma-2) based on their different pharmacological profile. Sigma-2 receptors are identified by radioligand-binding studies as a binding site with high affinity for di-o-tolylguanidine (DTG) and haloperidol.</text>
</comment>
<comment type="similarity">
    <text evidence="7">Belongs to the TMEM97/sigma-2 receptor family.</text>
</comment>
<keyword id="KW-0256">Endoplasmic reticulum</keyword>
<keyword id="KW-0472">Membrane</keyword>
<keyword id="KW-0539">Nucleus</keyword>
<keyword id="KW-1185">Reference proteome</keyword>
<keyword id="KW-0812">Transmembrane</keyword>
<keyword id="KW-1133">Transmembrane helix</keyword>
<dbReference type="EMBL" id="AK155107">
    <property type="protein sequence ID" value="BAE33052.1"/>
    <property type="molecule type" value="mRNA"/>
</dbReference>
<dbReference type="EMBL" id="AK171954">
    <property type="protein sequence ID" value="BAE42746.1"/>
    <property type="molecule type" value="mRNA"/>
</dbReference>
<dbReference type="EMBL" id="AL591177">
    <property type="status" value="NOT_ANNOTATED_CDS"/>
    <property type="molecule type" value="Genomic_DNA"/>
</dbReference>
<dbReference type="EMBL" id="BC018156">
    <property type="protein sequence ID" value="AAH18156.1"/>
    <property type="molecule type" value="mRNA"/>
</dbReference>
<dbReference type="EMBL" id="BC093511">
    <property type="protein sequence ID" value="AAH93511.1"/>
    <property type="molecule type" value="mRNA"/>
</dbReference>
<dbReference type="CCDS" id="CCDS25112.1"/>
<dbReference type="RefSeq" id="NP_598467.1">
    <property type="nucleotide sequence ID" value="NM_133706.2"/>
</dbReference>
<dbReference type="SMR" id="Q8VD00"/>
<dbReference type="FunCoup" id="Q8VD00">
    <property type="interactions" value="1498"/>
</dbReference>
<dbReference type="STRING" id="10090.ENSMUSP00000099532"/>
<dbReference type="BindingDB" id="Q8VD00"/>
<dbReference type="ChEMBL" id="CHEMBL4802011"/>
<dbReference type="GuidetoPHARMACOLOGY" id="2553"/>
<dbReference type="iPTMnet" id="Q8VD00"/>
<dbReference type="PhosphoSitePlus" id="Q8VD00"/>
<dbReference type="SwissPalm" id="Q8VD00"/>
<dbReference type="jPOST" id="Q8VD00"/>
<dbReference type="PaxDb" id="10090-ENSMUSP00000099532"/>
<dbReference type="PeptideAtlas" id="Q8VD00"/>
<dbReference type="ProteomicsDB" id="261205"/>
<dbReference type="Pumba" id="Q8VD00"/>
<dbReference type="TopDownProteomics" id="Q8VD00"/>
<dbReference type="Antibodypedia" id="50911">
    <property type="antibodies" value="107 antibodies from 13 providers"/>
</dbReference>
<dbReference type="DNASU" id="69071"/>
<dbReference type="Ensembl" id="ENSMUST00000103242.5">
    <property type="protein sequence ID" value="ENSMUSP00000099532.5"/>
    <property type="gene ID" value="ENSMUSG00000037278.10"/>
</dbReference>
<dbReference type="GeneID" id="69071"/>
<dbReference type="KEGG" id="mmu:69071"/>
<dbReference type="UCSC" id="uc007kjv.1">
    <property type="organism name" value="mouse"/>
</dbReference>
<dbReference type="AGR" id="MGI:1916321"/>
<dbReference type="CTD" id="27346"/>
<dbReference type="MGI" id="MGI:1916321">
    <property type="gene designation" value="Tmem97"/>
</dbReference>
<dbReference type="VEuPathDB" id="HostDB:ENSMUSG00000037278"/>
<dbReference type="eggNOG" id="ENOG502RZRX">
    <property type="taxonomic scope" value="Eukaryota"/>
</dbReference>
<dbReference type="GeneTree" id="ENSGT00390000007149"/>
<dbReference type="HOGENOM" id="CLU_086812_1_0_1"/>
<dbReference type="InParanoid" id="Q8VD00"/>
<dbReference type="OMA" id="EFKDPMV"/>
<dbReference type="OrthoDB" id="433124at2759"/>
<dbReference type="PhylomeDB" id="Q8VD00"/>
<dbReference type="TreeFam" id="TF300241"/>
<dbReference type="BioGRID-ORCS" id="69071">
    <property type="hits" value="4 hits in 78 CRISPR screens"/>
</dbReference>
<dbReference type="ChiTaRS" id="Tmem97">
    <property type="organism name" value="mouse"/>
</dbReference>
<dbReference type="PRO" id="PR:Q8VD00"/>
<dbReference type="Proteomes" id="UP000000589">
    <property type="component" value="Chromosome 11"/>
</dbReference>
<dbReference type="RNAct" id="Q8VD00">
    <property type="molecule type" value="protein"/>
</dbReference>
<dbReference type="Bgee" id="ENSMUSG00000037278">
    <property type="expression patterns" value="Expressed in spermatocyte and 102 other cell types or tissues"/>
</dbReference>
<dbReference type="GO" id="GO:0005783">
    <property type="term" value="C:endoplasmic reticulum"/>
    <property type="evidence" value="ECO:0000250"/>
    <property type="project" value="UniProtKB"/>
</dbReference>
<dbReference type="GO" id="GO:0005764">
    <property type="term" value="C:lysosome"/>
    <property type="evidence" value="ECO:0000250"/>
    <property type="project" value="UniProtKB"/>
</dbReference>
<dbReference type="GO" id="GO:0031965">
    <property type="term" value="C:nuclear membrane"/>
    <property type="evidence" value="ECO:0000250"/>
    <property type="project" value="UniProtKB"/>
</dbReference>
<dbReference type="GO" id="GO:0005886">
    <property type="term" value="C:plasma membrane"/>
    <property type="evidence" value="ECO:0000250"/>
    <property type="project" value="UniProtKB"/>
</dbReference>
<dbReference type="GO" id="GO:0005791">
    <property type="term" value="C:rough endoplasmic reticulum"/>
    <property type="evidence" value="ECO:0000250"/>
    <property type="project" value="UniProtKB"/>
</dbReference>
<dbReference type="GO" id="GO:0030867">
    <property type="term" value="C:rough endoplasmic reticulum membrane"/>
    <property type="evidence" value="ECO:0007669"/>
    <property type="project" value="UniProtKB-SubCell"/>
</dbReference>
<dbReference type="GO" id="GO:0015485">
    <property type="term" value="F:cholesterol binding"/>
    <property type="evidence" value="ECO:0000250"/>
    <property type="project" value="UniProtKB"/>
</dbReference>
<dbReference type="GO" id="GO:0008142">
    <property type="term" value="F:oxysterol binding"/>
    <property type="evidence" value="ECO:0000315"/>
    <property type="project" value="UniProtKB"/>
</dbReference>
<dbReference type="GO" id="GO:0042632">
    <property type="term" value="P:cholesterol homeostasis"/>
    <property type="evidence" value="ECO:0000250"/>
    <property type="project" value="UniProtKB"/>
</dbReference>
<dbReference type="GO" id="GO:0140077">
    <property type="term" value="P:positive regulation of lipoprotein transport"/>
    <property type="evidence" value="ECO:0000250"/>
    <property type="project" value="UniProtKB"/>
</dbReference>
<dbReference type="GO" id="GO:0090303">
    <property type="term" value="P:positive regulation of wound healing"/>
    <property type="evidence" value="ECO:0000250"/>
    <property type="project" value="UniProtKB"/>
</dbReference>
<dbReference type="GO" id="GO:0032383">
    <property type="term" value="P:regulation of intracellular cholesterol transport"/>
    <property type="evidence" value="ECO:0000250"/>
    <property type="project" value="UniProtKB"/>
</dbReference>
<dbReference type="GO" id="GO:0032377">
    <property type="term" value="P:regulation of intracellular lipid transport"/>
    <property type="evidence" value="ECO:0000250"/>
    <property type="project" value="UniProtKB"/>
</dbReference>
<dbReference type="InterPro" id="IPR033118">
    <property type="entry name" value="EXPERA"/>
</dbReference>
<dbReference type="InterPro" id="IPR051987">
    <property type="entry name" value="Sigma-2_receptor-like"/>
</dbReference>
<dbReference type="InterPro" id="IPR016964">
    <property type="entry name" value="Sigma2_recept"/>
</dbReference>
<dbReference type="PANTHER" id="PTHR31204">
    <property type="entry name" value="SIGMA INTRACELLULAR RECEPTOR 2"/>
    <property type="match status" value="1"/>
</dbReference>
<dbReference type="PANTHER" id="PTHR31204:SF1">
    <property type="entry name" value="SIGMA INTRACELLULAR RECEPTOR 2"/>
    <property type="match status" value="1"/>
</dbReference>
<dbReference type="Pfam" id="PF05241">
    <property type="entry name" value="EBP"/>
    <property type="match status" value="1"/>
</dbReference>
<dbReference type="PIRSF" id="PIRSF031032">
    <property type="entry name" value="TMP_97_prd"/>
    <property type="match status" value="1"/>
</dbReference>
<dbReference type="PROSITE" id="PS51751">
    <property type="entry name" value="EXPERA"/>
    <property type="match status" value="1"/>
</dbReference>
<reference key="1">
    <citation type="journal article" date="2005" name="Science">
        <title>The transcriptional landscape of the mammalian genome.</title>
        <authorList>
            <person name="Carninci P."/>
            <person name="Kasukawa T."/>
            <person name="Katayama S."/>
            <person name="Gough J."/>
            <person name="Frith M.C."/>
            <person name="Maeda N."/>
            <person name="Oyama R."/>
            <person name="Ravasi T."/>
            <person name="Lenhard B."/>
            <person name="Wells C."/>
            <person name="Kodzius R."/>
            <person name="Shimokawa K."/>
            <person name="Bajic V.B."/>
            <person name="Brenner S.E."/>
            <person name="Batalov S."/>
            <person name="Forrest A.R."/>
            <person name="Zavolan M."/>
            <person name="Davis M.J."/>
            <person name="Wilming L.G."/>
            <person name="Aidinis V."/>
            <person name="Allen J.E."/>
            <person name="Ambesi-Impiombato A."/>
            <person name="Apweiler R."/>
            <person name="Aturaliya R.N."/>
            <person name="Bailey T.L."/>
            <person name="Bansal M."/>
            <person name="Baxter L."/>
            <person name="Beisel K.W."/>
            <person name="Bersano T."/>
            <person name="Bono H."/>
            <person name="Chalk A.M."/>
            <person name="Chiu K.P."/>
            <person name="Choudhary V."/>
            <person name="Christoffels A."/>
            <person name="Clutterbuck D.R."/>
            <person name="Crowe M.L."/>
            <person name="Dalla E."/>
            <person name="Dalrymple B.P."/>
            <person name="de Bono B."/>
            <person name="Della Gatta G."/>
            <person name="di Bernardo D."/>
            <person name="Down T."/>
            <person name="Engstrom P."/>
            <person name="Fagiolini M."/>
            <person name="Faulkner G."/>
            <person name="Fletcher C.F."/>
            <person name="Fukushima T."/>
            <person name="Furuno M."/>
            <person name="Futaki S."/>
            <person name="Gariboldi M."/>
            <person name="Georgii-Hemming P."/>
            <person name="Gingeras T.R."/>
            <person name="Gojobori T."/>
            <person name="Green R.E."/>
            <person name="Gustincich S."/>
            <person name="Harbers M."/>
            <person name="Hayashi Y."/>
            <person name="Hensch T.K."/>
            <person name="Hirokawa N."/>
            <person name="Hill D."/>
            <person name="Huminiecki L."/>
            <person name="Iacono M."/>
            <person name="Ikeo K."/>
            <person name="Iwama A."/>
            <person name="Ishikawa T."/>
            <person name="Jakt M."/>
            <person name="Kanapin A."/>
            <person name="Katoh M."/>
            <person name="Kawasawa Y."/>
            <person name="Kelso J."/>
            <person name="Kitamura H."/>
            <person name="Kitano H."/>
            <person name="Kollias G."/>
            <person name="Krishnan S.P."/>
            <person name="Kruger A."/>
            <person name="Kummerfeld S.K."/>
            <person name="Kurochkin I.V."/>
            <person name="Lareau L.F."/>
            <person name="Lazarevic D."/>
            <person name="Lipovich L."/>
            <person name="Liu J."/>
            <person name="Liuni S."/>
            <person name="McWilliam S."/>
            <person name="Madan Babu M."/>
            <person name="Madera M."/>
            <person name="Marchionni L."/>
            <person name="Matsuda H."/>
            <person name="Matsuzawa S."/>
            <person name="Miki H."/>
            <person name="Mignone F."/>
            <person name="Miyake S."/>
            <person name="Morris K."/>
            <person name="Mottagui-Tabar S."/>
            <person name="Mulder N."/>
            <person name="Nakano N."/>
            <person name="Nakauchi H."/>
            <person name="Ng P."/>
            <person name="Nilsson R."/>
            <person name="Nishiguchi S."/>
            <person name="Nishikawa S."/>
            <person name="Nori F."/>
            <person name="Ohara O."/>
            <person name="Okazaki Y."/>
            <person name="Orlando V."/>
            <person name="Pang K.C."/>
            <person name="Pavan W.J."/>
            <person name="Pavesi G."/>
            <person name="Pesole G."/>
            <person name="Petrovsky N."/>
            <person name="Piazza S."/>
            <person name="Reed J."/>
            <person name="Reid J.F."/>
            <person name="Ring B.Z."/>
            <person name="Ringwald M."/>
            <person name="Rost B."/>
            <person name="Ruan Y."/>
            <person name="Salzberg S.L."/>
            <person name="Sandelin A."/>
            <person name="Schneider C."/>
            <person name="Schoenbach C."/>
            <person name="Sekiguchi K."/>
            <person name="Semple C.A."/>
            <person name="Seno S."/>
            <person name="Sessa L."/>
            <person name="Sheng Y."/>
            <person name="Shibata Y."/>
            <person name="Shimada H."/>
            <person name="Shimada K."/>
            <person name="Silva D."/>
            <person name="Sinclair B."/>
            <person name="Sperling S."/>
            <person name="Stupka E."/>
            <person name="Sugiura K."/>
            <person name="Sultana R."/>
            <person name="Takenaka Y."/>
            <person name="Taki K."/>
            <person name="Tammoja K."/>
            <person name="Tan S.L."/>
            <person name="Tang S."/>
            <person name="Taylor M.S."/>
            <person name="Tegner J."/>
            <person name="Teichmann S.A."/>
            <person name="Ueda H.R."/>
            <person name="van Nimwegen E."/>
            <person name="Verardo R."/>
            <person name="Wei C.L."/>
            <person name="Yagi K."/>
            <person name="Yamanishi H."/>
            <person name="Zabarovsky E."/>
            <person name="Zhu S."/>
            <person name="Zimmer A."/>
            <person name="Hide W."/>
            <person name="Bult C."/>
            <person name="Grimmond S.M."/>
            <person name="Teasdale R.D."/>
            <person name="Liu E.T."/>
            <person name="Brusic V."/>
            <person name="Quackenbush J."/>
            <person name="Wahlestedt C."/>
            <person name="Mattick J.S."/>
            <person name="Hume D.A."/>
            <person name="Kai C."/>
            <person name="Sasaki D."/>
            <person name="Tomaru Y."/>
            <person name="Fukuda S."/>
            <person name="Kanamori-Katayama M."/>
            <person name="Suzuki M."/>
            <person name="Aoki J."/>
            <person name="Arakawa T."/>
            <person name="Iida J."/>
            <person name="Imamura K."/>
            <person name="Itoh M."/>
            <person name="Kato T."/>
            <person name="Kawaji H."/>
            <person name="Kawagashira N."/>
            <person name="Kawashima T."/>
            <person name="Kojima M."/>
            <person name="Kondo S."/>
            <person name="Konno H."/>
            <person name="Nakano K."/>
            <person name="Ninomiya N."/>
            <person name="Nishio T."/>
            <person name="Okada M."/>
            <person name="Plessy C."/>
            <person name="Shibata K."/>
            <person name="Shiraki T."/>
            <person name="Suzuki S."/>
            <person name="Tagami M."/>
            <person name="Waki K."/>
            <person name="Watahiki A."/>
            <person name="Okamura-Oho Y."/>
            <person name="Suzuki H."/>
            <person name="Kawai J."/>
            <person name="Hayashizaki Y."/>
        </authorList>
    </citation>
    <scope>NUCLEOTIDE SEQUENCE [LARGE SCALE MRNA]</scope>
    <source>
        <strain>NOD</strain>
        <tissue>Dendritic cell</tissue>
        <tissue>Spleen</tissue>
    </source>
</reference>
<reference key="2">
    <citation type="journal article" date="2009" name="PLoS Biol.">
        <title>Lineage-specific biology revealed by a finished genome assembly of the mouse.</title>
        <authorList>
            <person name="Church D.M."/>
            <person name="Goodstadt L."/>
            <person name="Hillier L.W."/>
            <person name="Zody M.C."/>
            <person name="Goldstein S."/>
            <person name="She X."/>
            <person name="Bult C.J."/>
            <person name="Agarwala R."/>
            <person name="Cherry J.L."/>
            <person name="DiCuccio M."/>
            <person name="Hlavina W."/>
            <person name="Kapustin Y."/>
            <person name="Meric P."/>
            <person name="Maglott D."/>
            <person name="Birtle Z."/>
            <person name="Marques A.C."/>
            <person name="Graves T."/>
            <person name="Zhou S."/>
            <person name="Teague B."/>
            <person name="Potamousis K."/>
            <person name="Churas C."/>
            <person name="Place M."/>
            <person name="Herschleb J."/>
            <person name="Runnheim R."/>
            <person name="Forrest D."/>
            <person name="Amos-Landgraf J."/>
            <person name="Schwartz D.C."/>
            <person name="Cheng Z."/>
            <person name="Lindblad-Toh K."/>
            <person name="Eichler E.E."/>
            <person name="Ponting C.P."/>
        </authorList>
    </citation>
    <scope>NUCLEOTIDE SEQUENCE [LARGE SCALE GENOMIC DNA]</scope>
    <source>
        <strain>C57BL/6J</strain>
    </source>
</reference>
<reference key="3">
    <citation type="journal article" date="2004" name="Genome Res.">
        <title>The status, quality, and expansion of the NIH full-length cDNA project: the Mammalian Gene Collection (MGC).</title>
        <authorList>
            <consortium name="The MGC Project Team"/>
        </authorList>
    </citation>
    <scope>NUCLEOTIDE SEQUENCE [LARGE SCALE MRNA]</scope>
    <source>
        <strain>FVB/N</strain>
        <tissue>Liver</tissue>
        <tissue>Salivary gland</tissue>
    </source>
</reference>
<reference key="4">
    <citation type="journal article" date="2010" name="Cell">
        <title>A tissue-specific atlas of mouse protein phosphorylation and expression.</title>
        <authorList>
            <person name="Huttlin E.L."/>
            <person name="Jedrychowski M.P."/>
            <person name="Elias J.E."/>
            <person name="Goswami T."/>
            <person name="Rad R."/>
            <person name="Beausoleil S.A."/>
            <person name="Villen J."/>
            <person name="Haas W."/>
            <person name="Sowa M.E."/>
            <person name="Gygi S.P."/>
        </authorList>
    </citation>
    <scope>IDENTIFICATION BY MASS SPECTROMETRY [LARGE SCALE ANALYSIS]</scope>
    <source>
        <tissue>Liver</tissue>
        <tissue>Pancreas</tissue>
        <tissue>Testis</tissue>
    </source>
</reference>
<reference key="5">
    <citation type="journal article" date="2021" name="Nat. Chem. Biol.">
        <title>A proteome-wide map of 20(S)-hydroxycholesterol interactors in cell membranes.</title>
        <authorList>
            <person name="Cheng Y.S."/>
            <person name="Zhang T."/>
            <person name="Ma X."/>
            <person name="Pratuangtham S."/>
            <person name="Zhang G.C."/>
            <person name="Ondrus A.A."/>
            <person name="Mafi A."/>
            <person name="Lomenick B."/>
            <person name="Jones J.J."/>
            <person name="Ondrus A.E."/>
        </authorList>
    </citation>
    <scope>FUNCTION</scope>
    <scope>MUTAGENESIS OF GLU-61; PHE-88; TRP-95 AND TYR-150</scope>
</reference>
<accession>Q8VD00</accession>
<evidence type="ECO:0000250" key="1">
    <source>
        <dbReference type="UniProtKB" id="Q12155"/>
    </source>
</evidence>
<evidence type="ECO:0000250" key="2">
    <source>
        <dbReference type="UniProtKB" id="Q3MHW7"/>
    </source>
</evidence>
<evidence type="ECO:0000250" key="3">
    <source>
        <dbReference type="UniProtKB" id="Q5BJF2"/>
    </source>
</evidence>
<evidence type="ECO:0000255" key="4"/>
<evidence type="ECO:0000255" key="5">
    <source>
        <dbReference type="PROSITE-ProRule" id="PRU01087"/>
    </source>
</evidence>
<evidence type="ECO:0000269" key="6">
    <source>
    </source>
</evidence>
<evidence type="ECO:0000305" key="7"/>
<evidence type="ECO:0000312" key="8">
    <source>
        <dbReference type="MGI" id="MGI:1916321"/>
    </source>
</evidence>
<protein>
    <recommendedName>
        <fullName evidence="3">Sigma intracellular receptor 2</fullName>
        <shortName evidence="3">Sigma-2 receptor</shortName>
        <shortName evidence="3">Sigma2 receptor</shortName>
    </recommendedName>
    <alternativeName>
        <fullName evidence="3">Transmembrane protein 97</fullName>
    </alternativeName>
</protein>